<gene>
    <name evidence="1" type="primary">lpxA</name>
    <name type="ordered locus">YE3272</name>
</gene>
<comment type="function">
    <text evidence="1">Involved in the biosynthesis of lipid A, a phosphorylated glycolipid that anchors the lipopolysaccharide to the outer membrane of the cell.</text>
</comment>
<comment type="catalytic activity">
    <reaction evidence="1">
        <text>a (3R)-hydroxyacyl-[ACP] + UDP-N-acetyl-alpha-D-glucosamine = a UDP-3-O-[(3R)-3-hydroxyacyl]-N-acetyl-alpha-D-glucosamine + holo-[ACP]</text>
        <dbReference type="Rhea" id="RHEA:67812"/>
        <dbReference type="Rhea" id="RHEA-COMP:9685"/>
        <dbReference type="Rhea" id="RHEA-COMP:9945"/>
        <dbReference type="ChEBI" id="CHEBI:57705"/>
        <dbReference type="ChEBI" id="CHEBI:64479"/>
        <dbReference type="ChEBI" id="CHEBI:78827"/>
        <dbReference type="ChEBI" id="CHEBI:173225"/>
        <dbReference type="EC" id="2.3.1.129"/>
    </reaction>
</comment>
<comment type="pathway">
    <text evidence="1">Glycolipid biosynthesis; lipid IV(A) biosynthesis; lipid IV(A) from (3R)-3-hydroxytetradecanoyl-[acyl-carrier-protein] and UDP-N-acetyl-alpha-D-glucosamine: step 1/6.</text>
</comment>
<comment type="subunit">
    <text evidence="1">Homotrimer.</text>
</comment>
<comment type="subcellular location">
    <subcellularLocation>
        <location evidence="1">Cytoplasm</location>
    </subcellularLocation>
</comment>
<comment type="similarity">
    <text evidence="1">Belongs to the transferase hexapeptide repeat family. LpxA subfamily.</text>
</comment>
<proteinExistence type="inferred from homology"/>
<reference key="1">
    <citation type="journal article" date="2006" name="PLoS Genet.">
        <title>The complete genome sequence and comparative genome analysis of the high pathogenicity Yersinia enterocolitica strain 8081.</title>
        <authorList>
            <person name="Thomson N.R."/>
            <person name="Howard S."/>
            <person name="Wren B.W."/>
            <person name="Holden M.T.G."/>
            <person name="Crossman L."/>
            <person name="Challis G.L."/>
            <person name="Churcher C."/>
            <person name="Mungall K."/>
            <person name="Brooks K."/>
            <person name="Chillingworth T."/>
            <person name="Feltwell T."/>
            <person name="Abdellah Z."/>
            <person name="Hauser H."/>
            <person name="Jagels K."/>
            <person name="Maddison M."/>
            <person name="Moule S."/>
            <person name="Sanders M."/>
            <person name="Whitehead S."/>
            <person name="Quail M.A."/>
            <person name="Dougan G."/>
            <person name="Parkhill J."/>
            <person name="Prentice M.B."/>
        </authorList>
    </citation>
    <scope>NUCLEOTIDE SEQUENCE [LARGE SCALE GENOMIC DNA]</scope>
    <source>
        <strain>NCTC 13174 / 8081</strain>
    </source>
</reference>
<organism>
    <name type="scientific">Yersinia enterocolitica serotype O:8 / biotype 1B (strain NCTC 13174 / 8081)</name>
    <dbReference type="NCBI Taxonomy" id="393305"/>
    <lineage>
        <taxon>Bacteria</taxon>
        <taxon>Pseudomonadati</taxon>
        <taxon>Pseudomonadota</taxon>
        <taxon>Gammaproteobacteria</taxon>
        <taxon>Enterobacterales</taxon>
        <taxon>Yersiniaceae</taxon>
        <taxon>Yersinia</taxon>
    </lineage>
</organism>
<keyword id="KW-0012">Acyltransferase</keyword>
<keyword id="KW-0963">Cytoplasm</keyword>
<keyword id="KW-0441">Lipid A biosynthesis</keyword>
<keyword id="KW-0444">Lipid biosynthesis</keyword>
<keyword id="KW-0443">Lipid metabolism</keyword>
<keyword id="KW-0677">Repeat</keyword>
<keyword id="KW-0808">Transferase</keyword>
<dbReference type="EC" id="2.3.1.129" evidence="1"/>
<dbReference type="EMBL" id="AM286415">
    <property type="protein sequence ID" value="CAL13302.1"/>
    <property type="molecule type" value="Genomic_DNA"/>
</dbReference>
<dbReference type="RefSeq" id="WP_005173176.1">
    <property type="nucleotide sequence ID" value="NC_008800.1"/>
</dbReference>
<dbReference type="RefSeq" id="YP_001007446.1">
    <property type="nucleotide sequence ID" value="NC_008800.1"/>
</dbReference>
<dbReference type="SMR" id="A1JP69"/>
<dbReference type="KEGG" id="yen:YE3272"/>
<dbReference type="PATRIC" id="fig|393305.7.peg.3480"/>
<dbReference type="eggNOG" id="COG1043">
    <property type="taxonomic scope" value="Bacteria"/>
</dbReference>
<dbReference type="HOGENOM" id="CLU_061249_0_0_6"/>
<dbReference type="OrthoDB" id="9807278at2"/>
<dbReference type="UniPathway" id="UPA00359">
    <property type="reaction ID" value="UER00477"/>
</dbReference>
<dbReference type="Proteomes" id="UP000000642">
    <property type="component" value="Chromosome"/>
</dbReference>
<dbReference type="GO" id="GO:0005737">
    <property type="term" value="C:cytoplasm"/>
    <property type="evidence" value="ECO:0007669"/>
    <property type="project" value="UniProtKB-SubCell"/>
</dbReference>
<dbReference type="GO" id="GO:0016020">
    <property type="term" value="C:membrane"/>
    <property type="evidence" value="ECO:0007669"/>
    <property type="project" value="GOC"/>
</dbReference>
<dbReference type="GO" id="GO:0008780">
    <property type="term" value="F:acyl-[acyl-carrier-protein]-UDP-N-acetylglucosamine O-acyltransferase activity"/>
    <property type="evidence" value="ECO:0007669"/>
    <property type="project" value="UniProtKB-UniRule"/>
</dbReference>
<dbReference type="GO" id="GO:0009245">
    <property type="term" value="P:lipid A biosynthetic process"/>
    <property type="evidence" value="ECO:0007669"/>
    <property type="project" value="UniProtKB-UniRule"/>
</dbReference>
<dbReference type="CDD" id="cd03351">
    <property type="entry name" value="LbH_UDP-GlcNAc_AT"/>
    <property type="match status" value="1"/>
</dbReference>
<dbReference type="FunFam" id="2.160.10.10:FF:000003">
    <property type="entry name" value="Acyl-[acyl-carrier-protein]--UDP-N-acetylglucosamine O-acyltransferase"/>
    <property type="match status" value="1"/>
</dbReference>
<dbReference type="Gene3D" id="2.160.10.10">
    <property type="entry name" value="Hexapeptide repeat proteins"/>
    <property type="match status" value="1"/>
</dbReference>
<dbReference type="Gene3D" id="1.20.1180.10">
    <property type="entry name" value="Udp N-acetylglucosamine O-acyltransferase, C-terminal domain"/>
    <property type="match status" value="1"/>
</dbReference>
<dbReference type="HAMAP" id="MF_00387">
    <property type="entry name" value="LpxA"/>
    <property type="match status" value="1"/>
</dbReference>
<dbReference type="InterPro" id="IPR029098">
    <property type="entry name" value="Acetyltransf_C"/>
</dbReference>
<dbReference type="InterPro" id="IPR037157">
    <property type="entry name" value="Acetyltransf_C_sf"/>
</dbReference>
<dbReference type="InterPro" id="IPR001451">
    <property type="entry name" value="Hexapep"/>
</dbReference>
<dbReference type="InterPro" id="IPR018357">
    <property type="entry name" value="Hexapep_transf_CS"/>
</dbReference>
<dbReference type="InterPro" id="IPR010137">
    <property type="entry name" value="Lipid_A_LpxA"/>
</dbReference>
<dbReference type="InterPro" id="IPR011004">
    <property type="entry name" value="Trimer_LpxA-like_sf"/>
</dbReference>
<dbReference type="NCBIfam" id="TIGR01852">
    <property type="entry name" value="lipid_A_lpxA"/>
    <property type="match status" value="1"/>
</dbReference>
<dbReference type="NCBIfam" id="NF003657">
    <property type="entry name" value="PRK05289.1"/>
    <property type="match status" value="1"/>
</dbReference>
<dbReference type="PANTHER" id="PTHR43480">
    <property type="entry name" value="ACYL-[ACYL-CARRIER-PROTEIN]--UDP-N-ACETYLGLUCOSAMINE O-ACYLTRANSFERASE"/>
    <property type="match status" value="1"/>
</dbReference>
<dbReference type="PANTHER" id="PTHR43480:SF1">
    <property type="entry name" value="ACYL-[ACYL-CARRIER-PROTEIN]--UDP-N-ACETYLGLUCOSAMINE O-ACYLTRANSFERASE, MITOCHONDRIAL-RELATED"/>
    <property type="match status" value="1"/>
</dbReference>
<dbReference type="Pfam" id="PF13720">
    <property type="entry name" value="Acetyltransf_11"/>
    <property type="match status" value="1"/>
</dbReference>
<dbReference type="Pfam" id="PF00132">
    <property type="entry name" value="Hexapep"/>
    <property type="match status" value="2"/>
</dbReference>
<dbReference type="PIRSF" id="PIRSF000456">
    <property type="entry name" value="UDP-GlcNAc_acltr"/>
    <property type="match status" value="1"/>
</dbReference>
<dbReference type="SUPFAM" id="SSF51161">
    <property type="entry name" value="Trimeric LpxA-like enzymes"/>
    <property type="match status" value="1"/>
</dbReference>
<dbReference type="PROSITE" id="PS00101">
    <property type="entry name" value="HEXAPEP_TRANSFERASES"/>
    <property type="match status" value="2"/>
</dbReference>
<evidence type="ECO:0000255" key="1">
    <source>
        <dbReference type="HAMAP-Rule" id="MF_00387"/>
    </source>
</evidence>
<protein>
    <recommendedName>
        <fullName evidence="1">Acyl-[acyl-carrier-protein]--UDP-N-acetylglucosamine O-acyltransferase</fullName>
        <shortName evidence="1">UDP-N-acetylglucosamine acyltransferase</shortName>
        <ecNumber evidence="1">2.3.1.129</ecNumber>
    </recommendedName>
</protein>
<name>LPXA_YERE8</name>
<feature type="chain" id="PRO_0000302613" description="Acyl-[acyl-carrier-protein]--UDP-N-acetylglucosamine O-acyltransferase">
    <location>
        <begin position="1"/>
        <end position="262"/>
    </location>
</feature>
<sequence length="262" mass="28004">MIDKTAVIHPSSIVEEGAVIGAGVHIGPFCFVGSQVEIGAGTELKSHVVVNGITKIGCDNQIYQFASIGEANQDLKYAGEPTRVEIGDRNRIRESVSIHRGTVQGGGLTKVGSDNLLMINAHIAHDCIIGDRCILANNATLGGHVEIDDFAIIGGMTAIHQFCVIGAHVMVGGCSGVAQDVPPFVIAQGNHATPFGINIEGLKRRGFDKESLHAIRNAYKLLYRSGRTLDEVKPEIAELAEQHSAVQAFIDFFARSTRGIIR</sequence>
<accession>A1JP69</accession>